<evidence type="ECO:0000250" key="1"/>
<evidence type="ECO:0000255" key="2">
    <source>
        <dbReference type="HAMAP-Rule" id="MF_00103"/>
    </source>
</evidence>
<protein>
    <recommendedName>
        <fullName evidence="2">Formamidopyrimidine-DNA glycosylase</fullName>
        <shortName evidence="2">Fapy-DNA glycosylase</shortName>
        <ecNumber evidence="2">3.2.2.23</ecNumber>
    </recommendedName>
    <alternativeName>
        <fullName evidence="2">DNA-(apurinic or apyrimidinic site) lyase MutM</fullName>
        <shortName evidence="2">AP lyase MutM</shortName>
        <ecNumber evidence="2">4.2.99.18</ecNumber>
    </alternativeName>
</protein>
<proteinExistence type="inferred from homology"/>
<dbReference type="EC" id="3.2.2.23" evidence="2"/>
<dbReference type="EC" id="4.2.99.18" evidence="2"/>
<dbReference type="EMBL" id="CP000230">
    <property type="protein sequence ID" value="ABC24593.1"/>
    <property type="molecule type" value="Genomic_DNA"/>
</dbReference>
<dbReference type="RefSeq" id="WP_011391546.1">
    <property type="nucleotide sequence ID" value="NC_007643.1"/>
</dbReference>
<dbReference type="RefSeq" id="YP_428880.1">
    <property type="nucleotide sequence ID" value="NC_007643.1"/>
</dbReference>
<dbReference type="SMR" id="Q2RMQ2"/>
<dbReference type="STRING" id="269796.Rru_A3799"/>
<dbReference type="EnsemblBacteria" id="ABC24593">
    <property type="protein sequence ID" value="ABC24593"/>
    <property type="gene ID" value="Rru_A3799"/>
</dbReference>
<dbReference type="KEGG" id="rru:Rru_A3799"/>
<dbReference type="PATRIC" id="fig|269796.9.peg.3921"/>
<dbReference type="eggNOG" id="COG0266">
    <property type="taxonomic scope" value="Bacteria"/>
</dbReference>
<dbReference type="HOGENOM" id="CLU_038423_1_1_5"/>
<dbReference type="PhylomeDB" id="Q2RMQ2"/>
<dbReference type="Proteomes" id="UP000001929">
    <property type="component" value="Chromosome"/>
</dbReference>
<dbReference type="GO" id="GO:0034039">
    <property type="term" value="F:8-oxo-7,8-dihydroguanine DNA N-glycosylase activity"/>
    <property type="evidence" value="ECO:0007669"/>
    <property type="project" value="TreeGrafter"/>
</dbReference>
<dbReference type="GO" id="GO:0140078">
    <property type="term" value="F:class I DNA-(apurinic or apyrimidinic site) endonuclease activity"/>
    <property type="evidence" value="ECO:0007669"/>
    <property type="project" value="UniProtKB-EC"/>
</dbReference>
<dbReference type="GO" id="GO:0003684">
    <property type="term" value="F:damaged DNA binding"/>
    <property type="evidence" value="ECO:0007669"/>
    <property type="project" value="InterPro"/>
</dbReference>
<dbReference type="GO" id="GO:0008270">
    <property type="term" value="F:zinc ion binding"/>
    <property type="evidence" value="ECO:0007669"/>
    <property type="project" value="UniProtKB-UniRule"/>
</dbReference>
<dbReference type="GO" id="GO:0006284">
    <property type="term" value="P:base-excision repair"/>
    <property type="evidence" value="ECO:0007669"/>
    <property type="project" value="InterPro"/>
</dbReference>
<dbReference type="CDD" id="cd08966">
    <property type="entry name" value="EcFpg-like_N"/>
    <property type="match status" value="1"/>
</dbReference>
<dbReference type="FunFam" id="1.10.8.50:FF:000003">
    <property type="entry name" value="Formamidopyrimidine-DNA glycosylase"/>
    <property type="match status" value="1"/>
</dbReference>
<dbReference type="Gene3D" id="1.10.8.50">
    <property type="match status" value="1"/>
</dbReference>
<dbReference type="Gene3D" id="3.20.190.10">
    <property type="entry name" value="MutM-like, N-terminal"/>
    <property type="match status" value="1"/>
</dbReference>
<dbReference type="HAMAP" id="MF_00103">
    <property type="entry name" value="Fapy_DNA_glycosyl"/>
    <property type="match status" value="1"/>
</dbReference>
<dbReference type="InterPro" id="IPR015886">
    <property type="entry name" value="DNA_glyclase/AP_lyase_DNA-bd"/>
</dbReference>
<dbReference type="InterPro" id="IPR020629">
    <property type="entry name" value="Formamido-pyr_DNA_Glyclase"/>
</dbReference>
<dbReference type="InterPro" id="IPR012319">
    <property type="entry name" value="FPG_cat"/>
</dbReference>
<dbReference type="InterPro" id="IPR035937">
    <property type="entry name" value="MutM-like_N-ter"/>
</dbReference>
<dbReference type="InterPro" id="IPR010979">
    <property type="entry name" value="Ribosomal_uS13-like_H2TH"/>
</dbReference>
<dbReference type="InterPro" id="IPR000214">
    <property type="entry name" value="Znf_DNA_glyclase/AP_lyase"/>
</dbReference>
<dbReference type="NCBIfam" id="TIGR00577">
    <property type="entry name" value="fpg"/>
    <property type="match status" value="1"/>
</dbReference>
<dbReference type="NCBIfam" id="NF002211">
    <property type="entry name" value="PRK01103.1"/>
    <property type="match status" value="1"/>
</dbReference>
<dbReference type="PANTHER" id="PTHR22993">
    <property type="entry name" value="FORMAMIDOPYRIMIDINE-DNA GLYCOSYLASE"/>
    <property type="match status" value="1"/>
</dbReference>
<dbReference type="PANTHER" id="PTHR22993:SF9">
    <property type="entry name" value="FORMAMIDOPYRIMIDINE-DNA GLYCOSYLASE"/>
    <property type="match status" value="1"/>
</dbReference>
<dbReference type="Pfam" id="PF01149">
    <property type="entry name" value="Fapy_DNA_glyco"/>
    <property type="match status" value="1"/>
</dbReference>
<dbReference type="Pfam" id="PF06831">
    <property type="entry name" value="H2TH"/>
    <property type="match status" value="1"/>
</dbReference>
<dbReference type="SMART" id="SM00898">
    <property type="entry name" value="Fapy_DNA_glyco"/>
    <property type="match status" value="1"/>
</dbReference>
<dbReference type="SMART" id="SM01232">
    <property type="entry name" value="H2TH"/>
    <property type="match status" value="1"/>
</dbReference>
<dbReference type="SUPFAM" id="SSF57716">
    <property type="entry name" value="Glucocorticoid receptor-like (DNA-binding domain)"/>
    <property type="match status" value="1"/>
</dbReference>
<dbReference type="SUPFAM" id="SSF81624">
    <property type="entry name" value="N-terminal domain of MutM-like DNA repair proteins"/>
    <property type="match status" value="1"/>
</dbReference>
<dbReference type="SUPFAM" id="SSF46946">
    <property type="entry name" value="S13-like H2TH domain"/>
    <property type="match status" value="1"/>
</dbReference>
<dbReference type="PROSITE" id="PS51068">
    <property type="entry name" value="FPG_CAT"/>
    <property type="match status" value="1"/>
</dbReference>
<dbReference type="PROSITE" id="PS51066">
    <property type="entry name" value="ZF_FPG_2"/>
    <property type="match status" value="1"/>
</dbReference>
<feature type="initiator methionine" description="Removed" evidence="1">
    <location>
        <position position="1"/>
    </location>
</feature>
<feature type="chain" id="PRO_1000008757" description="Formamidopyrimidine-DNA glycosylase">
    <location>
        <begin position="2"/>
        <end position="281"/>
    </location>
</feature>
<feature type="zinc finger region" description="FPG-type; degenerate" evidence="2">
    <location>
        <begin position="241"/>
        <end position="281"/>
    </location>
</feature>
<feature type="active site" description="Schiff-base intermediate with DNA" evidence="2">
    <location>
        <position position="2"/>
    </location>
</feature>
<feature type="active site" description="Proton donor" evidence="2">
    <location>
        <position position="3"/>
    </location>
</feature>
<feature type="active site" description="Proton donor; for beta-elimination activity" evidence="2">
    <location>
        <position position="58"/>
    </location>
</feature>
<feature type="active site" description="Proton donor; for delta-elimination activity" evidence="2">
    <location>
        <position position="271"/>
    </location>
</feature>
<feature type="binding site" evidence="2">
    <location>
        <position position="94"/>
    </location>
    <ligand>
        <name>DNA</name>
        <dbReference type="ChEBI" id="CHEBI:16991"/>
    </ligand>
</feature>
<feature type="binding site" evidence="2">
    <location>
        <position position="113"/>
    </location>
    <ligand>
        <name>DNA</name>
        <dbReference type="ChEBI" id="CHEBI:16991"/>
    </ligand>
</feature>
<feature type="binding site" evidence="2">
    <location>
        <position position="156"/>
    </location>
    <ligand>
        <name>DNA</name>
        <dbReference type="ChEBI" id="CHEBI:16991"/>
    </ligand>
</feature>
<keyword id="KW-0227">DNA damage</keyword>
<keyword id="KW-0234">DNA repair</keyword>
<keyword id="KW-0238">DNA-binding</keyword>
<keyword id="KW-0326">Glycosidase</keyword>
<keyword id="KW-0378">Hydrolase</keyword>
<keyword id="KW-0456">Lyase</keyword>
<keyword id="KW-0479">Metal-binding</keyword>
<keyword id="KW-0511">Multifunctional enzyme</keyword>
<keyword id="KW-1185">Reference proteome</keyword>
<keyword id="KW-0862">Zinc</keyword>
<keyword id="KW-0863">Zinc-finger</keyword>
<gene>
    <name evidence="2" type="primary">mutM</name>
    <name evidence="2" type="synonym">fpg</name>
    <name type="ordered locus">Rru_A3799</name>
</gene>
<comment type="function">
    <text evidence="2">Involved in base excision repair of DNA damaged by oxidation or by mutagenic agents. Acts as a DNA glycosylase that recognizes and removes damaged bases. Has a preference for oxidized purines, such as 7,8-dihydro-8-oxoguanine (8-oxoG). Has AP (apurinic/apyrimidinic) lyase activity and introduces nicks in the DNA strand. Cleaves the DNA backbone by beta-delta elimination to generate a single-strand break at the site of the removed base with both 3'- and 5'-phosphates.</text>
</comment>
<comment type="catalytic activity">
    <reaction evidence="2">
        <text>Hydrolysis of DNA containing ring-opened 7-methylguanine residues, releasing 2,6-diamino-4-hydroxy-5-(N-methyl)formamidopyrimidine.</text>
        <dbReference type="EC" id="3.2.2.23"/>
    </reaction>
</comment>
<comment type="catalytic activity">
    <reaction evidence="2">
        <text>2'-deoxyribonucleotide-(2'-deoxyribose 5'-phosphate)-2'-deoxyribonucleotide-DNA = a 3'-end 2'-deoxyribonucleotide-(2,3-dehydro-2,3-deoxyribose 5'-phosphate)-DNA + a 5'-end 5'-phospho-2'-deoxyribonucleoside-DNA + H(+)</text>
        <dbReference type="Rhea" id="RHEA:66592"/>
        <dbReference type="Rhea" id="RHEA-COMP:13180"/>
        <dbReference type="Rhea" id="RHEA-COMP:16897"/>
        <dbReference type="Rhea" id="RHEA-COMP:17067"/>
        <dbReference type="ChEBI" id="CHEBI:15378"/>
        <dbReference type="ChEBI" id="CHEBI:136412"/>
        <dbReference type="ChEBI" id="CHEBI:157695"/>
        <dbReference type="ChEBI" id="CHEBI:167181"/>
        <dbReference type="EC" id="4.2.99.18"/>
    </reaction>
</comment>
<comment type="cofactor">
    <cofactor evidence="2">
        <name>Zn(2+)</name>
        <dbReference type="ChEBI" id="CHEBI:29105"/>
    </cofactor>
    <text evidence="2">Binds 1 zinc ion per subunit.</text>
</comment>
<comment type="subunit">
    <text evidence="2">Monomer.</text>
</comment>
<comment type="similarity">
    <text evidence="2">Belongs to the FPG family.</text>
</comment>
<accession>Q2RMQ2</accession>
<reference key="1">
    <citation type="journal article" date="2011" name="Stand. Genomic Sci.">
        <title>Complete genome sequence of Rhodospirillum rubrum type strain (S1).</title>
        <authorList>
            <person name="Munk A.C."/>
            <person name="Copeland A."/>
            <person name="Lucas S."/>
            <person name="Lapidus A."/>
            <person name="Del Rio T.G."/>
            <person name="Barry K."/>
            <person name="Detter J.C."/>
            <person name="Hammon N."/>
            <person name="Israni S."/>
            <person name="Pitluck S."/>
            <person name="Brettin T."/>
            <person name="Bruce D."/>
            <person name="Han C."/>
            <person name="Tapia R."/>
            <person name="Gilna P."/>
            <person name="Schmutz J."/>
            <person name="Larimer F."/>
            <person name="Land M."/>
            <person name="Kyrpides N.C."/>
            <person name="Mavromatis K."/>
            <person name="Richardson P."/>
            <person name="Rohde M."/>
            <person name="Goeker M."/>
            <person name="Klenk H.P."/>
            <person name="Zhang Y."/>
            <person name="Roberts G.P."/>
            <person name="Reslewic S."/>
            <person name="Schwartz D.C."/>
        </authorList>
    </citation>
    <scope>NUCLEOTIDE SEQUENCE [LARGE SCALE GENOMIC DNA]</scope>
    <source>
        <strain>ATCC 11170 / ATH 1.1.1 / DSM 467 / LMG 4362 / NCIMB 8255 / S1</strain>
    </source>
</reference>
<name>FPG_RHORT</name>
<sequence length="281" mass="30195">MPELPEVETVRLGLTPALVGERLSRVAARRPALRLPIPVDLVQRLTGKVVGSLDRRAKYLLLRMIDGPVALIHLGMSGSMTVGPLAGHAEPGPHDHILFETEAGLRVTFRDPRRFGLITLAEPETLDDHPLLAKLGPEPLSEAFDAEVLVRRLNGRQAPIKAALLDQGVVAGLGNIYVSEALFRAGISPLRPAASVTGAWAEALVAAIRAVLGEAIAAGGSSLRDHRQTDGALGYFQHRFAVYDRVGQPCPGCDCDVARTGGIERMVQSGRSTFFCGRRQR</sequence>
<organism>
    <name type="scientific">Rhodospirillum rubrum (strain ATCC 11170 / ATH 1.1.1 / DSM 467 / LMG 4362 / NCIMB 8255 / S1)</name>
    <dbReference type="NCBI Taxonomy" id="269796"/>
    <lineage>
        <taxon>Bacteria</taxon>
        <taxon>Pseudomonadati</taxon>
        <taxon>Pseudomonadota</taxon>
        <taxon>Alphaproteobacteria</taxon>
        <taxon>Rhodospirillales</taxon>
        <taxon>Rhodospirillaceae</taxon>
        <taxon>Rhodospirillum</taxon>
    </lineage>
</organism>